<accession>Q9X6G2</accession>
<proteinExistence type="evidence at protein level"/>
<keyword id="KW-0002">3D-structure</keyword>
<keyword id="KW-0963">Cytoplasm</keyword>
<keyword id="KW-0489">Methyltransferase</keyword>
<keyword id="KW-1185">Reference proteome</keyword>
<keyword id="KW-0698">rRNA processing</keyword>
<keyword id="KW-0949">S-adenosyl-L-methionine</keyword>
<keyword id="KW-0808">Transferase</keyword>
<comment type="function">
    <text evidence="1">Specifically methylates the guanosine in position 1516 of 16S rRNA.</text>
</comment>
<comment type="catalytic activity">
    <reaction evidence="1">
        <text>guanosine(1516) in 16S rRNA + S-adenosyl-L-methionine = N(2)-methylguanosine(1516) in 16S rRNA + S-adenosyl-L-homocysteine + H(+)</text>
        <dbReference type="Rhea" id="RHEA:43220"/>
        <dbReference type="Rhea" id="RHEA-COMP:10412"/>
        <dbReference type="Rhea" id="RHEA-COMP:10413"/>
        <dbReference type="ChEBI" id="CHEBI:15378"/>
        <dbReference type="ChEBI" id="CHEBI:57856"/>
        <dbReference type="ChEBI" id="CHEBI:59789"/>
        <dbReference type="ChEBI" id="CHEBI:74269"/>
        <dbReference type="ChEBI" id="CHEBI:74481"/>
        <dbReference type="EC" id="2.1.1.242"/>
    </reaction>
</comment>
<comment type="subcellular location">
    <subcellularLocation>
        <location evidence="1">Cytoplasm</location>
    </subcellularLocation>
</comment>
<comment type="similarity">
    <text evidence="1">Belongs to the methyltransferase superfamily. RsmJ family.</text>
</comment>
<dbReference type="EC" id="2.1.1.242" evidence="1"/>
<dbReference type="EMBL" id="AF137028">
    <property type="protein sequence ID" value="AAD31478.1"/>
    <property type="molecule type" value="Genomic_DNA"/>
</dbReference>
<dbReference type="EMBL" id="AE006468">
    <property type="protein sequence ID" value="AAL22453.1"/>
    <property type="molecule type" value="Genomic_DNA"/>
</dbReference>
<dbReference type="RefSeq" id="NP_462494.1">
    <property type="nucleotide sequence ID" value="NC_003197.2"/>
</dbReference>
<dbReference type="RefSeq" id="WP_001165134.1">
    <property type="nucleotide sequence ID" value="NC_003197.2"/>
</dbReference>
<dbReference type="PDB" id="2PKW">
    <property type="method" value="X-ray"/>
    <property type="resolution" value="2.10 A"/>
    <property type="chains" value="A=1-252"/>
</dbReference>
<dbReference type="PDBsum" id="2PKW"/>
<dbReference type="SMR" id="Q9X6G2"/>
<dbReference type="STRING" id="99287.STM3593"/>
<dbReference type="PaxDb" id="99287-STM3593"/>
<dbReference type="DNASU" id="1255116"/>
<dbReference type="GeneID" id="1255116"/>
<dbReference type="KEGG" id="stm:STM3593"/>
<dbReference type="PATRIC" id="fig|99287.12.peg.3797"/>
<dbReference type="HOGENOM" id="CLU_076324_0_0_6"/>
<dbReference type="OMA" id="YDIYPKK"/>
<dbReference type="PhylomeDB" id="Q9X6G2"/>
<dbReference type="BioCyc" id="SENT99287:STM3593-MONOMER"/>
<dbReference type="EvolutionaryTrace" id="Q9X6G2"/>
<dbReference type="Proteomes" id="UP000001014">
    <property type="component" value="Chromosome"/>
</dbReference>
<dbReference type="GO" id="GO:0005737">
    <property type="term" value="C:cytoplasm"/>
    <property type="evidence" value="ECO:0007669"/>
    <property type="project" value="UniProtKB-SubCell"/>
</dbReference>
<dbReference type="GO" id="GO:0036308">
    <property type="term" value="F:16S rRNA (guanine(1516)-N(2))-methyltransferase activity"/>
    <property type="evidence" value="ECO:0000318"/>
    <property type="project" value="GO_Central"/>
</dbReference>
<dbReference type="GO" id="GO:0070475">
    <property type="term" value="P:rRNA base methylation"/>
    <property type="evidence" value="ECO:0000318"/>
    <property type="project" value="GO_Central"/>
</dbReference>
<dbReference type="CDD" id="cd02440">
    <property type="entry name" value="AdoMet_MTases"/>
    <property type="match status" value="1"/>
</dbReference>
<dbReference type="FunFam" id="3.40.50.150:FF:000072">
    <property type="entry name" value="Ribosomal RNA small subunit methyltransferase J"/>
    <property type="match status" value="1"/>
</dbReference>
<dbReference type="Gene3D" id="3.40.50.150">
    <property type="entry name" value="Vaccinia Virus protein VP39"/>
    <property type="match status" value="1"/>
</dbReference>
<dbReference type="Gene3D" id="3.40.1630.10">
    <property type="entry name" value="YhiQ-like domain"/>
    <property type="match status" value="1"/>
</dbReference>
<dbReference type="HAMAP" id="MF_01523">
    <property type="entry name" value="16SrRNA_methyltr_J"/>
    <property type="match status" value="1"/>
</dbReference>
<dbReference type="InterPro" id="IPR007536">
    <property type="entry name" value="16SrRNA_methylTrfase_J"/>
</dbReference>
<dbReference type="InterPro" id="IPR029063">
    <property type="entry name" value="SAM-dependent_MTases_sf"/>
</dbReference>
<dbReference type="NCBIfam" id="NF008012">
    <property type="entry name" value="PRK10742.1"/>
    <property type="match status" value="1"/>
</dbReference>
<dbReference type="PANTHER" id="PTHR36112">
    <property type="entry name" value="RIBOSOMAL RNA SMALL SUBUNIT METHYLTRANSFERASE J"/>
    <property type="match status" value="1"/>
</dbReference>
<dbReference type="PANTHER" id="PTHR36112:SF1">
    <property type="entry name" value="RIBOSOMAL RNA SMALL SUBUNIT METHYLTRANSFERASE J"/>
    <property type="match status" value="1"/>
</dbReference>
<dbReference type="Pfam" id="PF04445">
    <property type="entry name" value="SAM_MT"/>
    <property type="match status" value="1"/>
</dbReference>
<dbReference type="SUPFAM" id="SSF53335">
    <property type="entry name" value="S-adenosyl-L-methionine-dependent methyltransferases"/>
    <property type="match status" value="1"/>
</dbReference>
<reference key="1">
    <citation type="journal article" date="2000" name="J. Bacteriol.">
        <title>opdA, a Salmonella enterica serovar Typhimurium gene encoding a protease, is part of an operon regulated by heat shock.</title>
        <authorList>
            <person name="Conlin C.A."/>
            <person name="Miller C.G."/>
        </authorList>
    </citation>
    <scope>NUCLEOTIDE SEQUENCE [GENOMIC DNA]</scope>
    <source>
        <strain>LT2</strain>
    </source>
</reference>
<reference key="2">
    <citation type="journal article" date="2001" name="Nature">
        <title>Complete genome sequence of Salmonella enterica serovar Typhimurium LT2.</title>
        <authorList>
            <person name="McClelland M."/>
            <person name="Sanderson K.E."/>
            <person name="Spieth J."/>
            <person name="Clifton S.W."/>
            <person name="Latreille P."/>
            <person name="Courtney L."/>
            <person name="Porwollik S."/>
            <person name="Ali J."/>
            <person name="Dante M."/>
            <person name="Du F."/>
            <person name="Hou S."/>
            <person name="Layman D."/>
            <person name="Leonard S."/>
            <person name="Nguyen C."/>
            <person name="Scott K."/>
            <person name="Holmes A."/>
            <person name="Grewal N."/>
            <person name="Mulvaney E."/>
            <person name="Ryan E."/>
            <person name="Sun H."/>
            <person name="Florea L."/>
            <person name="Miller W."/>
            <person name="Stoneking T."/>
            <person name="Nhan M."/>
            <person name="Waterston R."/>
            <person name="Wilson R.K."/>
        </authorList>
    </citation>
    <scope>NUCLEOTIDE SEQUENCE [LARGE SCALE GENOMIC DNA]</scope>
    <source>
        <strain>LT2 / SGSC1412 / ATCC 700720</strain>
    </source>
</reference>
<reference key="3">
    <citation type="submission" date="2007-04" db="PDB data bank">
        <title>Crystal structure of UPF0341 protein YhiQ from Salmonella typhimurium.</title>
        <authorList>
            <consortium name="Northeast structural genomics consortium (NESG)"/>
        </authorList>
    </citation>
    <scope>X-RAY CRYSTALLOGRAPHY (2.10 ANGSTROMS)</scope>
    <source>
        <strain>LT2 / SGSC1412 / ATCC 700720</strain>
    </source>
</reference>
<name>RSMJ_SALTY</name>
<protein>
    <recommendedName>
        <fullName evidence="1">Ribosomal RNA small subunit methyltransferase J</fullName>
        <ecNumber evidence="1">2.1.1.242</ecNumber>
    </recommendedName>
    <alternativeName>
        <fullName evidence="1">16S rRNA m2G1516 methyltransferase</fullName>
    </alternativeName>
    <alternativeName>
        <fullName evidence="1">rRNA (guanine-N(2)-)-methyltransferase</fullName>
    </alternativeName>
</protein>
<organism>
    <name type="scientific">Salmonella typhimurium (strain LT2 / SGSC1412 / ATCC 700720)</name>
    <dbReference type="NCBI Taxonomy" id="99287"/>
    <lineage>
        <taxon>Bacteria</taxon>
        <taxon>Pseudomonadati</taxon>
        <taxon>Pseudomonadota</taxon>
        <taxon>Gammaproteobacteria</taxon>
        <taxon>Enterobacterales</taxon>
        <taxon>Enterobacteriaceae</taxon>
        <taxon>Salmonella</taxon>
    </lineage>
</organism>
<feature type="chain" id="PRO_0000212091" description="Ribosomal RNA small subunit methyltransferase J">
    <location>
        <begin position="1"/>
        <end position="252"/>
    </location>
</feature>
<feature type="binding site" evidence="1">
    <location>
        <begin position="101"/>
        <end position="102"/>
    </location>
    <ligand>
        <name>S-adenosyl-L-methionine</name>
        <dbReference type="ChEBI" id="CHEBI:59789"/>
    </ligand>
</feature>
<feature type="binding site" evidence="1">
    <location>
        <begin position="117"/>
        <end position="118"/>
    </location>
    <ligand>
        <name>S-adenosyl-L-methionine</name>
        <dbReference type="ChEBI" id="CHEBI:59789"/>
    </ligand>
</feature>
<feature type="binding site" evidence="1">
    <location>
        <begin position="153"/>
        <end position="154"/>
    </location>
    <ligand>
        <name>S-adenosyl-L-methionine</name>
        <dbReference type="ChEBI" id="CHEBI:59789"/>
    </ligand>
</feature>
<feature type="binding site" evidence="1">
    <location>
        <position position="171"/>
    </location>
    <ligand>
        <name>S-adenosyl-L-methionine</name>
        <dbReference type="ChEBI" id="CHEBI:59789"/>
    </ligand>
</feature>
<feature type="sequence conflict" description="In Ref. 1; AAD31478." evidence="2" ref="1">
    <original>P</original>
    <variation>PP</variation>
    <location>
        <position position="225"/>
    </location>
</feature>
<feature type="strand" evidence="3">
    <location>
        <begin position="2"/>
        <end position="7"/>
    </location>
</feature>
<feature type="helix" evidence="3">
    <location>
        <begin position="15"/>
        <end position="23"/>
    </location>
</feature>
<feature type="strand" evidence="3">
    <location>
        <begin position="32"/>
        <end position="37"/>
    </location>
</feature>
<feature type="strand" evidence="3">
    <location>
        <begin position="42"/>
        <end position="46"/>
    </location>
</feature>
<feature type="helix" evidence="3">
    <location>
        <begin position="50"/>
        <end position="52"/>
    </location>
</feature>
<feature type="strand" evidence="3">
    <location>
        <begin position="59"/>
        <end position="61"/>
    </location>
</feature>
<feature type="helix" evidence="3">
    <location>
        <begin position="62"/>
        <end position="70"/>
    </location>
</feature>
<feature type="helix" evidence="3">
    <location>
        <begin position="73"/>
        <end position="75"/>
    </location>
</feature>
<feature type="helix" evidence="3">
    <location>
        <begin position="77"/>
        <end position="81"/>
    </location>
</feature>
<feature type="strand" evidence="3">
    <location>
        <begin position="92"/>
        <end position="94"/>
    </location>
</feature>
<feature type="helix" evidence="3">
    <location>
        <begin position="101"/>
        <end position="109"/>
    </location>
</feature>
<feature type="strand" evidence="3">
    <location>
        <begin position="113"/>
        <end position="117"/>
    </location>
</feature>
<feature type="helix" evidence="3">
    <location>
        <begin position="120"/>
        <end position="135"/>
    </location>
</feature>
<feature type="strand" evidence="3">
    <location>
        <begin position="137"/>
        <end position="139"/>
    </location>
</feature>
<feature type="helix" evidence="3">
    <location>
        <begin position="140"/>
        <end position="146"/>
    </location>
</feature>
<feature type="strand" evidence="3">
    <location>
        <begin position="147"/>
        <end position="152"/>
    </location>
</feature>
<feature type="turn" evidence="3">
    <location>
        <begin position="154"/>
        <end position="156"/>
    </location>
</feature>
<feature type="strand" evidence="3">
    <location>
        <begin position="166"/>
        <end position="170"/>
    </location>
</feature>
<feature type="turn" evidence="3">
    <location>
        <begin position="179"/>
        <end position="182"/>
    </location>
</feature>
<feature type="helix" evidence="3">
    <location>
        <begin position="185"/>
        <end position="194"/>
    </location>
</feature>
<feature type="helix" evidence="3">
    <location>
        <begin position="200"/>
        <end position="203"/>
    </location>
</feature>
<feature type="helix" evidence="3">
    <location>
        <begin position="204"/>
        <end position="210"/>
    </location>
</feature>
<feature type="strand" evidence="3">
    <location>
        <begin position="212"/>
        <end position="220"/>
    </location>
</feature>
<feature type="helix" evidence="3">
    <location>
        <begin position="226"/>
        <end position="228"/>
    </location>
</feature>
<feature type="strand" evidence="3">
    <location>
        <begin position="234"/>
        <end position="236"/>
    </location>
</feature>
<feature type="strand" evidence="3">
    <location>
        <begin position="238"/>
        <end position="246"/>
    </location>
</feature>
<evidence type="ECO:0000255" key="1">
    <source>
        <dbReference type="HAMAP-Rule" id="MF_01523"/>
    </source>
</evidence>
<evidence type="ECO:0000305" key="2"/>
<evidence type="ECO:0007829" key="3">
    <source>
        <dbReference type="PDB" id="2PKW"/>
    </source>
</evidence>
<sequence>MQICLMDETGATDGALSVLAARWGLEHDEDNPMALVMTPQHLELRKRDEPKLGGIFVDFVGGAMAHRRKFGGGRGEAVAKAVGIKGDYLPDVVDATAGLGRDAFVLASVGCRVRMLERNPVVAALLDDGLTRGYADADIGGWLQERLQLIHASSLTALTDITPRPQVVYLDPMFPHRQKSALVKKEMRVFQSLVGPDLDADGLLEPARQLATKRVVVKRPDYAPPLADVATPNAIVTKGHRFDIYAGTPLTE</sequence>
<gene>
    <name evidence="1" type="primary">rsmJ</name>
    <name type="synonym">yhiQ</name>
    <name type="ordered locus">STM3593</name>
</gene>